<feature type="chain" id="PRO_0000320831" description="Protein translocase subunit SecA">
    <location>
        <begin position="1"/>
        <end position="905"/>
    </location>
</feature>
<feature type="region of interest" description="Disordered" evidence="2">
    <location>
        <begin position="836"/>
        <end position="905"/>
    </location>
</feature>
<feature type="compositionally biased region" description="Basic and acidic residues" evidence="2">
    <location>
        <begin position="841"/>
        <end position="858"/>
    </location>
</feature>
<feature type="compositionally biased region" description="Basic residues" evidence="2">
    <location>
        <begin position="896"/>
        <end position="905"/>
    </location>
</feature>
<feature type="binding site" evidence="1">
    <location>
        <position position="87"/>
    </location>
    <ligand>
        <name>ATP</name>
        <dbReference type="ChEBI" id="CHEBI:30616"/>
    </ligand>
</feature>
<feature type="binding site" evidence="1">
    <location>
        <begin position="105"/>
        <end position="109"/>
    </location>
    <ligand>
        <name>ATP</name>
        <dbReference type="ChEBI" id="CHEBI:30616"/>
    </ligand>
</feature>
<feature type="binding site" evidence="1">
    <location>
        <position position="512"/>
    </location>
    <ligand>
        <name>ATP</name>
        <dbReference type="ChEBI" id="CHEBI:30616"/>
    </ligand>
</feature>
<feature type="binding site" evidence="1">
    <location>
        <position position="890"/>
    </location>
    <ligand>
        <name>Zn(2+)</name>
        <dbReference type="ChEBI" id="CHEBI:29105"/>
    </ligand>
</feature>
<feature type="binding site" evidence="1">
    <location>
        <position position="892"/>
    </location>
    <ligand>
        <name>Zn(2+)</name>
        <dbReference type="ChEBI" id="CHEBI:29105"/>
    </ligand>
</feature>
<feature type="binding site" evidence="1">
    <location>
        <position position="901"/>
    </location>
    <ligand>
        <name>Zn(2+)</name>
        <dbReference type="ChEBI" id="CHEBI:29105"/>
    </ligand>
</feature>
<feature type="binding site" evidence="1">
    <location>
        <position position="902"/>
    </location>
    <ligand>
        <name>Zn(2+)</name>
        <dbReference type="ChEBI" id="CHEBI:29105"/>
    </ligand>
</feature>
<protein>
    <recommendedName>
        <fullName evidence="1">Protein translocase subunit SecA</fullName>
        <ecNumber evidence="1">7.4.2.8</ecNumber>
    </recommendedName>
</protein>
<reference key="1">
    <citation type="journal article" date="2004" name="Proc. Natl. Acad. Sci. U.S.A.">
        <title>Genome sequence of the deep-sea gamma-proteobacterium Idiomarina loihiensis reveals amino acid fermentation as a source of carbon and energy.</title>
        <authorList>
            <person name="Hou S."/>
            <person name="Saw J.H."/>
            <person name="Lee K.S."/>
            <person name="Freitas T.A."/>
            <person name="Belisle C."/>
            <person name="Kawarabayasi Y."/>
            <person name="Donachie S.P."/>
            <person name="Pikina A."/>
            <person name="Galperin M.Y."/>
            <person name="Koonin E.V."/>
            <person name="Makarova K.S."/>
            <person name="Omelchenko M.V."/>
            <person name="Sorokin A."/>
            <person name="Wolf Y.I."/>
            <person name="Li Q.X."/>
            <person name="Keum Y.S."/>
            <person name="Campbell S."/>
            <person name="Denery J."/>
            <person name="Aizawa S."/>
            <person name="Shibata S."/>
            <person name="Malahoff A."/>
            <person name="Alam M."/>
        </authorList>
    </citation>
    <scope>NUCLEOTIDE SEQUENCE [LARGE SCALE GENOMIC DNA]</scope>
    <source>
        <strain>ATCC BAA-735 / DSM 15497 / L2-TR</strain>
    </source>
</reference>
<evidence type="ECO:0000255" key="1">
    <source>
        <dbReference type="HAMAP-Rule" id="MF_01382"/>
    </source>
</evidence>
<evidence type="ECO:0000256" key="2">
    <source>
        <dbReference type="SAM" id="MobiDB-lite"/>
    </source>
</evidence>
<accession>Q5R0N7</accession>
<keyword id="KW-0067">ATP-binding</keyword>
<keyword id="KW-0997">Cell inner membrane</keyword>
<keyword id="KW-1003">Cell membrane</keyword>
<keyword id="KW-0963">Cytoplasm</keyword>
<keyword id="KW-0472">Membrane</keyword>
<keyword id="KW-0479">Metal-binding</keyword>
<keyword id="KW-0547">Nucleotide-binding</keyword>
<keyword id="KW-0653">Protein transport</keyword>
<keyword id="KW-1185">Reference proteome</keyword>
<keyword id="KW-1278">Translocase</keyword>
<keyword id="KW-0811">Translocation</keyword>
<keyword id="KW-0813">Transport</keyword>
<keyword id="KW-0862">Zinc</keyword>
<organism>
    <name type="scientific">Idiomarina loihiensis (strain ATCC BAA-735 / DSM 15497 / L2-TR)</name>
    <dbReference type="NCBI Taxonomy" id="283942"/>
    <lineage>
        <taxon>Bacteria</taxon>
        <taxon>Pseudomonadati</taxon>
        <taxon>Pseudomonadota</taxon>
        <taxon>Gammaproteobacteria</taxon>
        <taxon>Alteromonadales</taxon>
        <taxon>Idiomarinaceae</taxon>
        <taxon>Idiomarina</taxon>
    </lineage>
</organism>
<gene>
    <name evidence="1" type="primary">secA</name>
    <name type="ordered locus">IL0445</name>
</gene>
<proteinExistence type="inferred from homology"/>
<name>SECA_IDILO</name>
<sequence length="905" mass="103239">MLGSLFRKVFGSRNDRILKTMKKDVERINLLEPEFEALSDAELKEKTAEFRKRLNDGERIEKILPEAFATVREASRRVFGMRHFDVQLIGGMVLNDNRIAEMKTGEGKTLTATLPAYLNALPGKGVHIITVNDYLAKRDAEFNQPLFDFLGLTVAFNIPGMAPEDKKAAYQADITYGTNNEFGFDYLRDNMAFAPQDRVQRELNYALVDEVDSILIDEARTPLIISGPAEDSSEMYRKMNELVPHLVRQEKEDTEEEQGDGDFTIDEKAKQLHLTEHGQEHIEELLKEKGMLDADDSLYSAANISLLHHINAALRAHHLFQKDVDYIIKDDKVVIVDEHTGRTMEGRRWSEGLHQAVEAKEGVPIQNENQTLASITFQNYFRLYNKLAGMTGTADTEAFEFQSIYGLETIVLPTNKPMVRDDRADLIYLTTLEKYEAIAEDIEECRKQKRPVLVGTVSIENSELLSQLLKKKKIPHAVLNAKFHEHEADIIAQAGRPGTVTIATNMAGRGTDIVLGGSWMAEVEKLEEPSNDKIEKIKQDWQKLHDAVIEAGGLHIIGTERHESRRIDNQLRGRAGRQGDPGSSRFYLSLEDPLMRIFASDRIGTMMKRLGMKEGEAIEHPWVTRAIENAQRKVEGRNFDVRKQLLEYDDVANDQRSVVYDQRNELLDEGDISETIVAIRDDVINSVISEYVPPQSLAELWDLKGLEERLRGDFHIELPLQQWLDEEDHFHEEVLRERVLEELVKAYQEKEEMVGPEVLRRFEKSIMLQSLDQHWKEHLAAMDHLRQGIHLRGYAQKNPKQEYKKEAFELFTEMLEALKLDVVTILSKVKVRAQEDVDAVDEQRKAADSAPREFRHEQSGPAAEEPQKNTDNAQGQPVRKGAKVGRNEPCPCGSGKKYKHCHGKL</sequence>
<dbReference type="EC" id="7.4.2.8" evidence="1"/>
<dbReference type="EMBL" id="AE017340">
    <property type="protein sequence ID" value="AAV81288.1"/>
    <property type="molecule type" value="Genomic_DNA"/>
</dbReference>
<dbReference type="RefSeq" id="WP_011233706.1">
    <property type="nucleotide sequence ID" value="NC_006512.1"/>
</dbReference>
<dbReference type="SMR" id="Q5R0N7"/>
<dbReference type="STRING" id="283942.IL0445"/>
<dbReference type="GeneID" id="41335597"/>
<dbReference type="KEGG" id="ilo:IL0445"/>
<dbReference type="eggNOG" id="COG0653">
    <property type="taxonomic scope" value="Bacteria"/>
</dbReference>
<dbReference type="HOGENOM" id="CLU_005314_3_0_6"/>
<dbReference type="OrthoDB" id="9805579at2"/>
<dbReference type="Proteomes" id="UP000001171">
    <property type="component" value="Chromosome"/>
</dbReference>
<dbReference type="GO" id="GO:0031522">
    <property type="term" value="C:cell envelope Sec protein transport complex"/>
    <property type="evidence" value="ECO:0007669"/>
    <property type="project" value="TreeGrafter"/>
</dbReference>
<dbReference type="GO" id="GO:0005829">
    <property type="term" value="C:cytosol"/>
    <property type="evidence" value="ECO:0007669"/>
    <property type="project" value="TreeGrafter"/>
</dbReference>
<dbReference type="GO" id="GO:0005886">
    <property type="term" value="C:plasma membrane"/>
    <property type="evidence" value="ECO:0007669"/>
    <property type="project" value="UniProtKB-SubCell"/>
</dbReference>
<dbReference type="GO" id="GO:0005524">
    <property type="term" value="F:ATP binding"/>
    <property type="evidence" value="ECO:0007669"/>
    <property type="project" value="UniProtKB-UniRule"/>
</dbReference>
<dbReference type="GO" id="GO:0046872">
    <property type="term" value="F:metal ion binding"/>
    <property type="evidence" value="ECO:0007669"/>
    <property type="project" value="UniProtKB-KW"/>
</dbReference>
<dbReference type="GO" id="GO:0008564">
    <property type="term" value="F:protein-exporting ATPase activity"/>
    <property type="evidence" value="ECO:0007669"/>
    <property type="project" value="UniProtKB-EC"/>
</dbReference>
<dbReference type="GO" id="GO:0065002">
    <property type="term" value="P:intracellular protein transmembrane transport"/>
    <property type="evidence" value="ECO:0007669"/>
    <property type="project" value="UniProtKB-UniRule"/>
</dbReference>
<dbReference type="GO" id="GO:0017038">
    <property type="term" value="P:protein import"/>
    <property type="evidence" value="ECO:0007669"/>
    <property type="project" value="InterPro"/>
</dbReference>
<dbReference type="GO" id="GO:0006605">
    <property type="term" value="P:protein targeting"/>
    <property type="evidence" value="ECO:0007669"/>
    <property type="project" value="UniProtKB-UniRule"/>
</dbReference>
<dbReference type="GO" id="GO:0043952">
    <property type="term" value="P:protein transport by the Sec complex"/>
    <property type="evidence" value="ECO:0007669"/>
    <property type="project" value="TreeGrafter"/>
</dbReference>
<dbReference type="CDD" id="cd17928">
    <property type="entry name" value="DEXDc_SecA"/>
    <property type="match status" value="1"/>
</dbReference>
<dbReference type="CDD" id="cd18803">
    <property type="entry name" value="SF2_C_secA"/>
    <property type="match status" value="1"/>
</dbReference>
<dbReference type="FunFam" id="1.10.3060.10:FF:000001">
    <property type="entry name" value="Preprotein translocase subunit SecA"/>
    <property type="match status" value="1"/>
</dbReference>
<dbReference type="FunFam" id="3.40.50.300:FF:000113">
    <property type="entry name" value="Preprotein translocase subunit SecA"/>
    <property type="match status" value="1"/>
</dbReference>
<dbReference type="FunFam" id="3.90.1440.10:FF:000001">
    <property type="entry name" value="Preprotein translocase subunit SecA"/>
    <property type="match status" value="1"/>
</dbReference>
<dbReference type="Gene3D" id="1.10.3060.10">
    <property type="entry name" value="Helical scaffold and wing domains of SecA"/>
    <property type="match status" value="1"/>
</dbReference>
<dbReference type="Gene3D" id="3.40.50.300">
    <property type="entry name" value="P-loop containing nucleotide triphosphate hydrolases"/>
    <property type="match status" value="2"/>
</dbReference>
<dbReference type="Gene3D" id="3.90.1440.10">
    <property type="entry name" value="SecA, preprotein cross-linking domain"/>
    <property type="match status" value="1"/>
</dbReference>
<dbReference type="HAMAP" id="MF_01382">
    <property type="entry name" value="SecA"/>
    <property type="match status" value="1"/>
</dbReference>
<dbReference type="InterPro" id="IPR014001">
    <property type="entry name" value="Helicase_ATP-bd"/>
</dbReference>
<dbReference type="InterPro" id="IPR001650">
    <property type="entry name" value="Helicase_C-like"/>
</dbReference>
<dbReference type="InterPro" id="IPR027417">
    <property type="entry name" value="P-loop_NTPase"/>
</dbReference>
<dbReference type="InterPro" id="IPR004027">
    <property type="entry name" value="SEC_C_motif"/>
</dbReference>
<dbReference type="InterPro" id="IPR000185">
    <property type="entry name" value="SecA"/>
</dbReference>
<dbReference type="InterPro" id="IPR020937">
    <property type="entry name" value="SecA_CS"/>
</dbReference>
<dbReference type="InterPro" id="IPR011115">
    <property type="entry name" value="SecA_DEAD"/>
</dbReference>
<dbReference type="InterPro" id="IPR014018">
    <property type="entry name" value="SecA_motor_DEAD"/>
</dbReference>
<dbReference type="InterPro" id="IPR011130">
    <property type="entry name" value="SecA_preprotein_X-link_dom"/>
</dbReference>
<dbReference type="InterPro" id="IPR044722">
    <property type="entry name" value="SecA_SF2_C"/>
</dbReference>
<dbReference type="InterPro" id="IPR011116">
    <property type="entry name" value="SecA_Wing/Scaffold"/>
</dbReference>
<dbReference type="InterPro" id="IPR036266">
    <property type="entry name" value="SecA_Wing/Scaffold_sf"/>
</dbReference>
<dbReference type="InterPro" id="IPR036670">
    <property type="entry name" value="SecA_X-link_sf"/>
</dbReference>
<dbReference type="NCBIfam" id="NF009538">
    <property type="entry name" value="PRK12904.1"/>
    <property type="match status" value="1"/>
</dbReference>
<dbReference type="NCBIfam" id="TIGR00963">
    <property type="entry name" value="secA"/>
    <property type="match status" value="1"/>
</dbReference>
<dbReference type="PANTHER" id="PTHR30612:SF0">
    <property type="entry name" value="CHLOROPLAST PROTEIN-TRANSPORTING ATPASE"/>
    <property type="match status" value="1"/>
</dbReference>
<dbReference type="PANTHER" id="PTHR30612">
    <property type="entry name" value="SECA INNER MEMBRANE COMPONENT OF SEC PROTEIN SECRETION SYSTEM"/>
    <property type="match status" value="1"/>
</dbReference>
<dbReference type="Pfam" id="PF21090">
    <property type="entry name" value="P-loop_SecA"/>
    <property type="match status" value="1"/>
</dbReference>
<dbReference type="Pfam" id="PF02810">
    <property type="entry name" value="SEC-C"/>
    <property type="match status" value="1"/>
</dbReference>
<dbReference type="Pfam" id="PF07517">
    <property type="entry name" value="SecA_DEAD"/>
    <property type="match status" value="1"/>
</dbReference>
<dbReference type="Pfam" id="PF01043">
    <property type="entry name" value="SecA_PP_bind"/>
    <property type="match status" value="1"/>
</dbReference>
<dbReference type="Pfam" id="PF07516">
    <property type="entry name" value="SecA_SW"/>
    <property type="match status" value="1"/>
</dbReference>
<dbReference type="PRINTS" id="PR00906">
    <property type="entry name" value="SECA"/>
</dbReference>
<dbReference type="SMART" id="SM00957">
    <property type="entry name" value="SecA_DEAD"/>
    <property type="match status" value="1"/>
</dbReference>
<dbReference type="SMART" id="SM00958">
    <property type="entry name" value="SecA_PP_bind"/>
    <property type="match status" value="1"/>
</dbReference>
<dbReference type="SUPFAM" id="SSF81886">
    <property type="entry name" value="Helical scaffold and wing domains of SecA"/>
    <property type="match status" value="1"/>
</dbReference>
<dbReference type="SUPFAM" id="SSF52540">
    <property type="entry name" value="P-loop containing nucleoside triphosphate hydrolases"/>
    <property type="match status" value="2"/>
</dbReference>
<dbReference type="SUPFAM" id="SSF81767">
    <property type="entry name" value="Pre-protein crosslinking domain of SecA"/>
    <property type="match status" value="1"/>
</dbReference>
<dbReference type="PROSITE" id="PS01312">
    <property type="entry name" value="SECA"/>
    <property type="match status" value="1"/>
</dbReference>
<dbReference type="PROSITE" id="PS51196">
    <property type="entry name" value="SECA_MOTOR_DEAD"/>
    <property type="match status" value="1"/>
</dbReference>
<comment type="function">
    <text evidence="1">Part of the Sec protein translocase complex. Interacts with the SecYEG preprotein conducting channel. Has a central role in coupling the hydrolysis of ATP to the transfer of proteins into and across the cell membrane, serving both as a receptor for the preprotein-SecB complex and as an ATP-driven molecular motor driving the stepwise translocation of polypeptide chains across the membrane.</text>
</comment>
<comment type="catalytic activity">
    <reaction evidence="1">
        <text>ATP + H2O + cellular proteinSide 1 = ADP + phosphate + cellular proteinSide 2.</text>
        <dbReference type="EC" id="7.4.2.8"/>
    </reaction>
</comment>
<comment type="cofactor">
    <cofactor evidence="1">
        <name>Zn(2+)</name>
        <dbReference type="ChEBI" id="CHEBI:29105"/>
    </cofactor>
    <text evidence="1">May bind 1 zinc ion per subunit.</text>
</comment>
<comment type="subunit">
    <text evidence="1">Monomer and homodimer. Part of the essential Sec protein translocation apparatus which comprises SecA, SecYEG and auxiliary proteins SecDF-YajC and YidC.</text>
</comment>
<comment type="subcellular location">
    <subcellularLocation>
        <location evidence="1">Cell inner membrane</location>
        <topology evidence="1">Peripheral membrane protein</topology>
        <orientation evidence="1">Cytoplasmic side</orientation>
    </subcellularLocation>
    <subcellularLocation>
        <location evidence="1">Cytoplasm</location>
    </subcellularLocation>
    <text evidence="1">Distribution is 50-50.</text>
</comment>
<comment type="similarity">
    <text evidence="1">Belongs to the SecA family.</text>
</comment>